<evidence type="ECO:0000255" key="1">
    <source>
        <dbReference type="PROSITE-ProRule" id="PRU01026"/>
    </source>
</evidence>
<sequence length="245" mass="28756">MNKNIKYSQNFLTSEKVLNQIIKQLNLKETDTVYEIGTGKGHLTTKLAKISKQVTSIELDSHLFNLSSEKLKLNTRVTLIHQDILQFQFPNKQRYKIVGSIPYHLSTQIIKKVVFESHASDIYLIVEEGFYKRTLDIHRTLGLLLHTQVSIQQLLKLPAECFHPKPKVNSVLIKLTRHTTDVPDKYWKLYTYFVSKWVNREYRQLFTKNQFHQAMKHAKVNNLSTVTYEQVLSIFNSYLLFNGRK</sequence>
<comment type="function">
    <text>This protein produces a dimethylation of the adenine residue at position 2085 in 23S rRNA, resulting in reduced affinity between ribosomes and macrolide-lincosamide-streptogramin B antibiotics.</text>
</comment>
<comment type="catalytic activity">
    <reaction>
        <text>adenosine(2085) in 23S rRNA + 2 S-adenosyl-L-methionine = N(6)-dimethyladenosine(2085) in 23S rRNA + 2 S-adenosyl-L-homocysteine + 2 H(+)</text>
        <dbReference type="Rhea" id="RHEA:42784"/>
        <dbReference type="Rhea" id="RHEA-COMP:10237"/>
        <dbReference type="Rhea" id="RHEA-COMP:10238"/>
        <dbReference type="ChEBI" id="CHEBI:15378"/>
        <dbReference type="ChEBI" id="CHEBI:57856"/>
        <dbReference type="ChEBI" id="CHEBI:59789"/>
        <dbReference type="ChEBI" id="CHEBI:74411"/>
        <dbReference type="ChEBI" id="CHEBI:74493"/>
        <dbReference type="EC" id="2.1.1.184"/>
    </reaction>
</comment>
<comment type="similarity">
    <text evidence="1">Belongs to the class I-like SAM-binding methyltransferase superfamily. rRNA adenine N(6)-methyltransferase family.</text>
</comment>
<dbReference type="EC" id="2.1.1.184"/>
<dbReference type="EMBL" id="L02938">
    <property type="protein sequence ID" value="AAC36955.1"/>
    <property type="molecule type" value="Genomic_DNA"/>
</dbReference>
<dbReference type="EMBL" id="U18931">
    <property type="protein sequence ID" value="AAC43480.1"/>
    <property type="molecule type" value="Genomic_DNA"/>
</dbReference>
<dbReference type="EMBL" id="X58285">
    <property type="protein sequence ID" value="CAA41221.1"/>
    <property type="molecule type" value="Genomic_DNA"/>
</dbReference>
<dbReference type="PIR" id="S16033">
    <property type="entry name" value="S16033"/>
</dbReference>
<dbReference type="SMR" id="P0A4D6"/>
<dbReference type="GO" id="GO:0005829">
    <property type="term" value="C:cytosol"/>
    <property type="evidence" value="ECO:0007669"/>
    <property type="project" value="TreeGrafter"/>
</dbReference>
<dbReference type="GO" id="GO:0052910">
    <property type="term" value="F:23S rRNA (adenine(2085)-N(6))-dimethyltransferase activity"/>
    <property type="evidence" value="ECO:0007669"/>
    <property type="project" value="UniProtKB-EC"/>
</dbReference>
<dbReference type="GO" id="GO:0003723">
    <property type="term" value="F:RNA binding"/>
    <property type="evidence" value="ECO:0007669"/>
    <property type="project" value="UniProtKB-KW"/>
</dbReference>
<dbReference type="GO" id="GO:0000179">
    <property type="term" value="F:rRNA (adenine-N6,N6-)-dimethyltransferase activity"/>
    <property type="evidence" value="ECO:0007669"/>
    <property type="project" value="InterPro"/>
</dbReference>
<dbReference type="GO" id="GO:0046677">
    <property type="term" value="P:response to antibiotic"/>
    <property type="evidence" value="ECO:0007669"/>
    <property type="project" value="UniProtKB-KW"/>
</dbReference>
<dbReference type="CDD" id="cd02440">
    <property type="entry name" value="AdoMet_MTases"/>
    <property type="match status" value="1"/>
</dbReference>
<dbReference type="Gene3D" id="1.10.8.100">
    <property type="entry name" value="Ribosomal RNA adenine dimethylase-like, domain 2"/>
    <property type="match status" value="1"/>
</dbReference>
<dbReference type="Gene3D" id="3.40.50.150">
    <property type="entry name" value="Vaccinia Virus protein VP39"/>
    <property type="match status" value="1"/>
</dbReference>
<dbReference type="InterPro" id="IPR001737">
    <property type="entry name" value="KsgA/Erm"/>
</dbReference>
<dbReference type="InterPro" id="IPR023165">
    <property type="entry name" value="rRNA_Ade_diMease-like_C"/>
</dbReference>
<dbReference type="InterPro" id="IPR020596">
    <property type="entry name" value="rRNA_Ade_Mease_Trfase_CS"/>
</dbReference>
<dbReference type="InterPro" id="IPR020598">
    <property type="entry name" value="rRNA_Ade_methylase_Trfase_N"/>
</dbReference>
<dbReference type="InterPro" id="IPR029063">
    <property type="entry name" value="SAM-dependent_MTases_sf"/>
</dbReference>
<dbReference type="NCBIfam" id="NF000499">
    <property type="entry name" value="Erm23S_rRNA_broad"/>
    <property type="match status" value="1"/>
</dbReference>
<dbReference type="NCBIfam" id="NF012220">
    <property type="entry name" value="erm_B_23S_MT"/>
    <property type="match status" value="1"/>
</dbReference>
<dbReference type="PANTHER" id="PTHR11727">
    <property type="entry name" value="DIMETHYLADENOSINE TRANSFERASE"/>
    <property type="match status" value="1"/>
</dbReference>
<dbReference type="PANTHER" id="PTHR11727:SF7">
    <property type="entry name" value="DIMETHYLADENOSINE TRANSFERASE-RELATED"/>
    <property type="match status" value="1"/>
</dbReference>
<dbReference type="Pfam" id="PF00398">
    <property type="entry name" value="RrnaAD"/>
    <property type="match status" value="1"/>
</dbReference>
<dbReference type="SMART" id="SM00650">
    <property type="entry name" value="rADc"/>
    <property type="match status" value="1"/>
</dbReference>
<dbReference type="SUPFAM" id="SSF53335">
    <property type="entry name" value="S-adenosyl-L-methionine-dependent methyltransferases"/>
    <property type="match status" value="1"/>
</dbReference>
<dbReference type="PROSITE" id="PS01131">
    <property type="entry name" value="RRNA_A_DIMETH"/>
    <property type="match status" value="1"/>
</dbReference>
<dbReference type="PROSITE" id="PS51689">
    <property type="entry name" value="SAM_RNA_A_N6_MT"/>
    <property type="match status" value="1"/>
</dbReference>
<keyword id="KW-0046">Antibiotic resistance</keyword>
<keyword id="KW-0489">Methyltransferase</keyword>
<keyword id="KW-0614">Plasmid</keyword>
<keyword id="KW-0694">RNA-binding</keyword>
<keyword id="KW-0949">S-adenosyl-L-methionine</keyword>
<keyword id="KW-0808">Transferase</keyword>
<reference key="1">
    <citation type="journal article" date="1992" name="Plasmid">
        <title>Construction of a sequenced Clostridium perfringens-Escherichia coli shuttle plasmid.</title>
        <authorList>
            <person name="Sloan J."/>
            <person name="Warner T.A."/>
            <person name="Scott P.T."/>
            <person name="Bannam T.L."/>
            <person name="Berryman D.I."/>
            <person name="Rood J.I."/>
        </authorList>
    </citation>
    <scope>NUCLEOTIDE SEQUENCE [GENOMIC DNA]</scope>
    <source>
        <plasmid>pIP401</plasmid>
    </source>
</reference>
<reference key="2">
    <citation type="journal article" date="1995" name="Antimicrob. Agents Chemother.">
        <title>The closely related ermB-ermAM genes from Clostridium perfringens, Enterococcus faecalis (pAM beta 1), and Streptococcus agalactiae (pIP501) are flanked by variants of a directly repeated sequence.</title>
        <authorList>
            <person name="Berryman D.I."/>
            <person name="Rood J.I."/>
        </authorList>
    </citation>
    <scope>NUCLEOTIDE SEQUENCE [GENOMIC DNA]</scope>
    <source>
        <strain>CP592</strain>
    </source>
</reference>
<geneLocation type="plasmid">
    <name>pIP401</name>
</geneLocation>
<accession>P0A4D6</accession>
<accession>P12038</accession>
<proteinExistence type="inferred from homology"/>
<name>ERM1_CLOPF</name>
<organism>
    <name type="scientific">Clostridium perfringens</name>
    <dbReference type="NCBI Taxonomy" id="1502"/>
    <lineage>
        <taxon>Bacteria</taxon>
        <taxon>Bacillati</taxon>
        <taxon>Bacillota</taxon>
        <taxon>Clostridia</taxon>
        <taxon>Eubacteriales</taxon>
        <taxon>Clostridiaceae</taxon>
        <taxon>Clostridium</taxon>
    </lineage>
</organism>
<protein>
    <recommendedName>
        <fullName>rRNA adenine N-6-methyltransferase</fullName>
        <ecNumber>2.1.1.184</ecNumber>
    </recommendedName>
    <alternativeName>
        <fullName>Macrolide-lincosamide-streptogramin B resistance protein</fullName>
    </alternativeName>
</protein>
<gene>
    <name type="primary">ermBP</name>
</gene>
<feature type="chain" id="PRO_0000101687" description="rRNA adenine N-6-methyltransferase">
    <location>
        <begin position="1"/>
        <end position="245"/>
    </location>
</feature>
<feature type="binding site" evidence="1">
    <location>
        <position position="10"/>
    </location>
    <ligand>
        <name>S-adenosyl-L-methionine</name>
        <dbReference type="ChEBI" id="CHEBI:59789"/>
    </ligand>
</feature>
<feature type="binding site" evidence="1">
    <location>
        <position position="12"/>
    </location>
    <ligand>
        <name>S-adenosyl-L-methionine</name>
        <dbReference type="ChEBI" id="CHEBI:59789"/>
    </ligand>
</feature>
<feature type="binding site" evidence="1">
    <location>
        <position position="37"/>
    </location>
    <ligand>
        <name>S-adenosyl-L-methionine</name>
        <dbReference type="ChEBI" id="CHEBI:59789"/>
    </ligand>
</feature>
<feature type="binding site" evidence="1">
    <location>
        <position position="58"/>
    </location>
    <ligand>
        <name>S-adenosyl-L-methionine</name>
        <dbReference type="ChEBI" id="CHEBI:59789"/>
    </ligand>
</feature>
<feature type="binding site" evidence="1">
    <location>
        <position position="83"/>
    </location>
    <ligand>
        <name>S-adenosyl-L-methionine</name>
        <dbReference type="ChEBI" id="CHEBI:59789"/>
    </ligand>
</feature>
<feature type="binding site" evidence="1">
    <location>
        <position position="100"/>
    </location>
    <ligand>
        <name>S-adenosyl-L-methionine</name>
        <dbReference type="ChEBI" id="CHEBI:59789"/>
    </ligand>
</feature>